<evidence type="ECO:0000255" key="1">
    <source>
        <dbReference type="PROSITE-ProRule" id="PRU00031"/>
    </source>
</evidence>
<evidence type="ECO:0000269" key="2">
    <source>
    </source>
</evidence>
<evidence type="ECO:0000269" key="3">
    <source>
    </source>
</evidence>
<evidence type="ECO:0000305" key="4"/>
<evidence type="ECO:0000305" key="5">
    <source>
    </source>
</evidence>
<evidence type="ECO:0007829" key="6">
    <source>
        <dbReference type="PDB" id="1JC6"/>
    </source>
</evidence>
<accession>P25660</accession>
<organism>
    <name type="scientific">Bungarus fasciatus</name>
    <name type="common">Banded krait</name>
    <name type="synonym">Pseudoboa fasciata</name>
    <dbReference type="NCBI Taxonomy" id="8613"/>
    <lineage>
        <taxon>Eukaryota</taxon>
        <taxon>Metazoa</taxon>
        <taxon>Chordata</taxon>
        <taxon>Craniata</taxon>
        <taxon>Vertebrata</taxon>
        <taxon>Euteleostomi</taxon>
        <taxon>Lepidosauria</taxon>
        <taxon>Squamata</taxon>
        <taxon>Bifurcata</taxon>
        <taxon>Unidentata</taxon>
        <taxon>Episquamata</taxon>
        <taxon>Toxicofera</taxon>
        <taxon>Serpentes</taxon>
        <taxon>Colubroidea</taxon>
        <taxon>Elapidae</taxon>
        <taxon>Bungarinae</taxon>
        <taxon>Bungarus</taxon>
    </lineage>
</organism>
<proteinExistence type="evidence at protein level"/>
<dbReference type="PDB" id="1JC6">
    <property type="method" value="NMR"/>
    <property type="chains" value="A=1-65"/>
</dbReference>
<dbReference type="PDBsum" id="1JC6"/>
<dbReference type="SMR" id="P25660"/>
<dbReference type="MEROPS" id="I02.031"/>
<dbReference type="EvolutionaryTrace" id="P25660"/>
<dbReference type="GO" id="GO:0005615">
    <property type="term" value="C:extracellular space"/>
    <property type="evidence" value="ECO:0007669"/>
    <property type="project" value="TreeGrafter"/>
</dbReference>
<dbReference type="GO" id="GO:0015459">
    <property type="term" value="F:potassium channel regulator activity"/>
    <property type="evidence" value="ECO:0007669"/>
    <property type="project" value="UniProtKB-KW"/>
</dbReference>
<dbReference type="GO" id="GO:0004867">
    <property type="term" value="F:serine-type endopeptidase inhibitor activity"/>
    <property type="evidence" value="ECO:0007669"/>
    <property type="project" value="UniProtKB-KW"/>
</dbReference>
<dbReference type="GO" id="GO:0090729">
    <property type="term" value="F:toxin activity"/>
    <property type="evidence" value="ECO:0007669"/>
    <property type="project" value="UniProtKB-KW"/>
</dbReference>
<dbReference type="CDD" id="cd22594">
    <property type="entry name" value="Kunitz_textilinin-like"/>
    <property type="match status" value="1"/>
</dbReference>
<dbReference type="FunFam" id="4.10.410.10:FF:000021">
    <property type="entry name" value="Serine protease inhibitor, putative"/>
    <property type="match status" value="1"/>
</dbReference>
<dbReference type="Gene3D" id="4.10.410.10">
    <property type="entry name" value="Pancreatic trypsin inhibitor Kunitz domain"/>
    <property type="match status" value="1"/>
</dbReference>
<dbReference type="InterPro" id="IPR002223">
    <property type="entry name" value="Kunitz_BPTI"/>
</dbReference>
<dbReference type="InterPro" id="IPR036880">
    <property type="entry name" value="Kunitz_BPTI_sf"/>
</dbReference>
<dbReference type="InterPro" id="IPR020901">
    <property type="entry name" value="Prtase_inh_Kunz-CS"/>
</dbReference>
<dbReference type="InterPro" id="IPR050098">
    <property type="entry name" value="TFPI/VKTCI-like"/>
</dbReference>
<dbReference type="PANTHER" id="PTHR10083:SF374">
    <property type="entry name" value="BPTI_KUNITZ INHIBITOR DOMAIN-CONTAINING PROTEIN"/>
    <property type="match status" value="1"/>
</dbReference>
<dbReference type="PANTHER" id="PTHR10083">
    <property type="entry name" value="KUNITZ-TYPE PROTEASE INHIBITOR-RELATED"/>
    <property type="match status" value="1"/>
</dbReference>
<dbReference type="Pfam" id="PF00014">
    <property type="entry name" value="Kunitz_BPTI"/>
    <property type="match status" value="1"/>
</dbReference>
<dbReference type="PRINTS" id="PR00759">
    <property type="entry name" value="BASICPTASE"/>
</dbReference>
<dbReference type="SMART" id="SM00131">
    <property type="entry name" value="KU"/>
    <property type="match status" value="1"/>
</dbReference>
<dbReference type="SUPFAM" id="SSF57362">
    <property type="entry name" value="BPTI-like"/>
    <property type="match status" value="1"/>
</dbReference>
<dbReference type="PROSITE" id="PS00280">
    <property type="entry name" value="BPTI_KUNITZ_1"/>
    <property type="match status" value="1"/>
</dbReference>
<dbReference type="PROSITE" id="PS50279">
    <property type="entry name" value="BPTI_KUNITZ_2"/>
    <property type="match status" value="1"/>
</dbReference>
<protein>
    <recommendedName>
        <fullName>Kunitz-type serine protease inhibitor IX</fullName>
    </recommendedName>
    <alternativeName>
        <fullName>Bungarus fasciatus fraction IX</fullName>
        <shortName>BF9</shortName>
    </alternativeName>
    <alternativeName>
        <fullName>Venom basic protease inhibitor IX</fullName>
    </alternativeName>
    <component>
        <recommendedName>
            <fullName>Kunitz-type serine protease inhibitor VIIIB</fullName>
        </recommendedName>
        <alternativeName>
            <fullName>Venom basic protease inhibitor VIIIB</fullName>
        </alternativeName>
    </component>
</protein>
<name>VKT9_BUNFA</name>
<reference key="1">
    <citation type="journal article" date="1983" name="Int. J. Pept. Protein Res.">
        <title>Complete amino acid sequences of two protease inhibitors in the venom of Bungarus fasciatus.</title>
        <authorList>
            <person name="Liu C.-S."/>
            <person name="Wu T.-C."/>
            <person name="Lo T.-B."/>
        </authorList>
    </citation>
    <scope>PROTEIN SEQUENCE</scope>
    <source>
        <tissue>Venom</tissue>
    </source>
</reference>
<reference key="2">
    <citation type="journal article" date="2014" name="J. Biochem. Mol. Toxicol.">
        <title>BF9, the first functionally characterized snake toxin peptide with Kunitz-type protease and potassium channel inhibiting properties.</title>
        <authorList>
            <person name="Yang W."/>
            <person name="Feng J."/>
            <person name="Wang B."/>
            <person name="Cao Z."/>
            <person name="Li W."/>
            <person name="Wu Y."/>
            <person name="Chen Z."/>
        </authorList>
    </citation>
    <scope>FUNCTION</scope>
    <scope>MUTAGENESIS OF ASN-17 AND ALA-18</scope>
</reference>
<reference key="3">
    <citation type="journal article" date="2001" name="J. Biol. Chem.">
        <title>Solution structure of a Kunitz-type chymotrypsin inhibitor isolated from the elapid snake Bungarus fasciatus.</title>
        <authorList>
            <person name="Chen C."/>
            <person name="Hsu C.-H."/>
            <person name="Su N.-Y."/>
            <person name="Lin Y.-C."/>
            <person name="Chiou S.-H."/>
            <person name="Wu S.-H."/>
        </authorList>
    </citation>
    <scope>STRUCTURE BY NMR</scope>
    <scope>DISULFIDE BONDS</scope>
    <scope>FUNCTION</scope>
    <source>
        <tissue>Venom</tissue>
    </source>
</reference>
<keyword id="KW-0002">3D-structure</keyword>
<keyword id="KW-0903">Direct protein sequencing</keyword>
<keyword id="KW-1015">Disulfide bond</keyword>
<keyword id="KW-0872">Ion channel impairing toxin</keyword>
<keyword id="KW-0632">Potassium channel impairing toxin</keyword>
<keyword id="KW-0646">Protease inhibitor</keyword>
<keyword id="KW-0964">Secreted</keyword>
<keyword id="KW-0722">Serine protease inhibitor</keyword>
<keyword id="KW-0800">Toxin</keyword>
<keyword id="KW-1220">Voltage-gated potassium channel impairing toxin</keyword>
<sequence length="65" mass="7294">KNRPTFCNLLPETGRCNALIPAFYYNSHLHKCQKFNYGGCGGNANNFKTIDECQRTCAAKYGRSS</sequence>
<feature type="chain" id="PRO_0000016861" description="Kunitz-type serine protease inhibitor IX">
    <location>
        <begin position="1"/>
        <end position="65"/>
    </location>
</feature>
<feature type="chain" id="PRO_0000016862" description="Kunitz-type serine protease inhibitor VIIIB">
    <location>
        <begin position="1"/>
        <end position="62"/>
    </location>
</feature>
<feature type="domain" description="BPTI/Kunitz inhibitor" evidence="1">
    <location>
        <begin position="7"/>
        <end position="57"/>
    </location>
</feature>
<feature type="site" description="Reactive bond for chymotrypsin">
    <location>
        <begin position="17"/>
        <end position="18"/>
    </location>
</feature>
<feature type="disulfide bond" evidence="1 2">
    <location>
        <begin position="7"/>
        <end position="57"/>
    </location>
</feature>
<feature type="disulfide bond" evidence="1 2">
    <location>
        <begin position="16"/>
        <end position="40"/>
    </location>
</feature>
<feature type="disulfide bond" evidence="1 2">
    <location>
        <begin position="32"/>
        <end position="53"/>
    </location>
</feature>
<feature type="mutagenesis site" description="Increase in trypsin and chymotrypsin inhibitory activities. Complete loss of elastase inhibitory activity." evidence="3">
    <original>N</original>
    <variation>K</variation>
    <location>
        <position position="17"/>
    </location>
</feature>
<feature type="mutagenesis site" description="Increase in chymotrypsin and elastase inhibitory activities. No change in trypsin inhibitory activity." evidence="3">
    <original>N</original>
    <variation>L</variation>
    <location>
        <position position="17"/>
    </location>
</feature>
<feature type="mutagenesis site" description="Complete loss of chymotrypsin and elastase inhibitory activity. No change in trypsin inhibitory activity." evidence="3">
    <original>A</original>
    <variation>F</variation>
    <location>
        <position position="18"/>
    </location>
</feature>
<feature type="helix" evidence="6">
    <location>
        <begin position="6"/>
        <end position="8"/>
    </location>
</feature>
<feature type="strand" evidence="6">
    <location>
        <begin position="22"/>
        <end position="26"/>
    </location>
</feature>
<feature type="turn" evidence="6">
    <location>
        <begin position="27"/>
        <end position="30"/>
    </location>
</feature>
<feature type="strand" evidence="6">
    <location>
        <begin position="31"/>
        <end position="35"/>
    </location>
</feature>
<feature type="strand" evidence="6">
    <location>
        <begin position="47"/>
        <end position="49"/>
    </location>
</feature>
<feature type="helix" evidence="6">
    <location>
        <begin position="50"/>
        <end position="56"/>
    </location>
</feature>
<comment type="function">
    <text evidence="2 3">Dual-function toxin that inhibits both serine proteases (high activity on chymotrypsin (Ki = 18 nM), and low activity on elastase) and voltage-gated potassium channels Kv1.3/KCNA3 (IC(50) = 120.0 nM).</text>
</comment>
<comment type="subcellular location">
    <subcellularLocation>
        <location>Secreted</location>
    </subcellularLocation>
</comment>
<comment type="tissue specificity">
    <text>Expressed by the venom gland.</text>
</comment>
<comment type="miscellaneous">
    <text evidence="5">Negative results: does not show inhibitory effect on trypsin.</text>
</comment>
<comment type="similarity">
    <text evidence="4">Belongs to the venom Kunitz-type family.</text>
</comment>